<feature type="chain" id="PRO_0000088041" description="tRNA (cytosine(38)-C(5))-methyltransferase">
    <location>
        <begin position="1"/>
        <end position="415"/>
    </location>
</feature>
<feature type="domain" description="SAM-dependent MTase C5-type" evidence="2">
    <location>
        <begin position="4"/>
        <end position="396"/>
    </location>
</feature>
<feature type="active site" evidence="2">
    <location>
        <position position="79"/>
    </location>
</feature>
<feature type="binding site" evidence="1">
    <location>
        <begin position="13"/>
        <end position="15"/>
    </location>
    <ligand>
        <name>S-adenosyl-L-methionine</name>
        <dbReference type="ChEBI" id="CHEBI:59789"/>
    </ligand>
</feature>
<feature type="binding site" evidence="1">
    <location>
        <position position="34"/>
    </location>
    <ligand>
        <name>S-adenosyl-L-methionine</name>
        <dbReference type="ChEBI" id="CHEBI:59789"/>
    </ligand>
</feature>
<feature type="binding site" evidence="1">
    <location>
        <begin position="57"/>
        <end position="58"/>
    </location>
    <ligand>
        <name>S-adenosyl-L-methionine</name>
        <dbReference type="ChEBI" id="CHEBI:59789"/>
    </ligand>
</feature>
<feature type="binding site" evidence="1">
    <location>
        <position position="76"/>
    </location>
    <ligand>
        <name>S-adenosyl-L-methionine</name>
        <dbReference type="ChEBI" id="CHEBI:59789"/>
    </ligand>
</feature>
<feature type="binding site" evidence="1">
    <location>
        <position position="376"/>
    </location>
    <ligand>
        <name>S-adenosyl-L-methionine</name>
        <dbReference type="ChEBI" id="CHEBI:59789"/>
    </ligand>
</feature>
<feature type="sequence conflict" description="In Ref. 2; AAC40130." evidence="9" ref="2">
    <original>F</original>
    <variation>S</variation>
    <location>
        <position position="164"/>
    </location>
</feature>
<accession>O55055</accession>
<accession>O35212</accession>
<sequence length="415" mass="46794">MEPLRVLELYSGIGGMHHALRESHIPAHVVAAIDVNTVANEVYKHNFPHTHLLSKTIEGISLEDFDKLSFNMILMSPPCQPFTRIGLQGDMTDPRTTSFLYILDILPRLQKLPKYILLENVKGFEVSSTRGLLIQTIEACGFQYQEFLLSPSSLGIPNSRLRYFLIAKLQSEPFPFQAPGQILMEFPKIVTVEPQKYAVVEESQPRVQRTGPRICAESSSTQSSGKDTILFKLETVEERDRKHQQDSDLSVQMLKDFLEDGDTDEYLLPPKLLLRYALLLDIVKPTSRRSMCFTKGYGSYIEGTGSVLQAAEDAQIENIYKSLPDLPPEEKIAKLSMLKLRYFTPKEIANLQGFPPEFGFPEKTTVKQRYRLLGNSLNVHVVAKLLTVLCEGFGNASESCHKMPLILDSNSKILS</sequence>
<dbReference type="EC" id="2.1.1.204" evidence="5"/>
<dbReference type="EMBL" id="AF012129">
    <property type="protein sequence ID" value="AAC53529.1"/>
    <property type="molecule type" value="mRNA"/>
</dbReference>
<dbReference type="EMBL" id="AF045889">
    <property type="protein sequence ID" value="AAC40130.1"/>
    <property type="molecule type" value="mRNA"/>
</dbReference>
<dbReference type="CCDS" id="CCDS15695.1"/>
<dbReference type="RefSeq" id="NP_034197.3">
    <property type="nucleotide sequence ID" value="NM_010067.4"/>
</dbReference>
<dbReference type="SMR" id="O55055"/>
<dbReference type="FunCoup" id="O55055">
    <property type="interactions" value="3527"/>
</dbReference>
<dbReference type="STRING" id="10090.ENSMUSP00000114572"/>
<dbReference type="iPTMnet" id="O55055"/>
<dbReference type="PhosphoSitePlus" id="O55055"/>
<dbReference type="PaxDb" id="10090-ENSMUSP00000114572"/>
<dbReference type="ProteomicsDB" id="298290"/>
<dbReference type="Pumba" id="O55055"/>
<dbReference type="Antibodypedia" id="4005">
    <property type="antibodies" value="470 antibodies from 36 providers"/>
</dbReference>
<dbReference type="DNASU" id="13434"/>
<dbReference type="Ensembl" id="ENSMUST00000124488.7">
    <property type="protein sequence ID" value="ENSMUSP00000114572.2"/>
    <property type="gene ID" value="ENSMUSG00000026723.11"/>
</dbReference>
<dbReference type="GeneID" id="13434"/>
<dbReference type="KEGG" id="mmu:13434"/>
<dbReference type="UCSC" id="uc008ika.2">
    <property type="organism name" value="mouse"/>
</dbReference>
<dbReference type="AGR" id="MGI:1274787"/>
<dbReference type="CTD" id="1787"/>
<dbReference type="MGI" id="MGI:1274787">
    <property type="gene designation" value="Trdmt1"/>
</dbReference>
<dbReference type="VEuPathDB" id="HostDB:ENSMUSG00000026723"/>
<dbReference type="eggNOG" id="KOG0919">
    <property type="taxonomic scope" value="Eukaryota"/>
</dbReference>
<dbReference type="GeneTree" id="ENSGT00390000016416"/>
<dbReference type="HOGENOM" id="CLU_049101_0_0_1"/>
<dbReference type="InParanoid" id="O55055"/>
<dbReference type="OMA" id="HYAFKYA"/>
<dbReference type="OrthoDB" id="414133at2759"/>
<dbReference type="PhylomeDB" id="O55055"/>
<dbReference type="TreeFam" id="TF300024"/>
<dbReference type="BRENDA" id="2.1.1.202">
    <property type="organism ID" value="3474"/>
</dbReference>
<dbReference type="BRENDA" id="2.1.1.204">
    <property type="organism ID" value="3474"/>
</dbReference>
<dbReference type="BRENDA" id="2.1.1.37">
    <property type="organism ID" value="3474"/>
</dbReference>
<dbReference type="BioGRID-ORCS" id="13434">
    <property type="hits" value="3 hits in 81 CRISPR screens"/>
</dbReference>
<dbReference type="PRO" id="PR:O55055"/>
<dbReference type="Proteomes" id="UP000000589">
    <property type="component" value="Chromosome 2"/>
</dbReference>
<dbReference type="RNAct" id="O55055">
    <property type="molecule type" value="protein"/>
</dbReference>
<dbReference type="Bgee" id="ENSMUSG00000026723">
    <property type="expression patterns" value="Expressed in otic placode and 223 other cell types or tissues"/>
</dbReference>
<dbReference type="ExpressionAtlas" id="O55055">
    <property type="expression patterns" value="baseline and differential"/>
</dbReference>
<dbReference type="GO" id="GO:0005737">
    <property type="term" value="C:cytoplasm"/>
    <property type="evidence" value="ECO:0000266"/>
    <property type="project" value="MGI"/>
</dbReference>
<dbReference type="GO" id="GO:0003723">
    <property type="term" value="F:RNA binding"/>
    <property type="evidence" value="ECO:0007669"/>
    <property type="project" value="UniProtKB-KW"/>
</dbReference>
<dbReference type="GO" id="GO:0016428">
    <property type="term" value="F:tRNA (cytidine-5-)-methyltransferase activity"/>
    <property type="evidence" value="ECO:0000315"/>
    <property type="project" value="UniProtKB"/>
</dbReference>
<dbReference type="GO" id="GO:0008175">
    <property type="term" value="F:tRNA methyltransferase activity"/>
    <property type="evidence" value="ECO:0000315"/>
    <property type="project" value="MGI"/>
</dbReference>
<dbReference type="GO" id="GO:0030488">
    <property type="term" value="P:tRNA methylation"/>
    <property type="evidence" value="ECO:0000315"/>
    <property type="project" value="UniProtKB"/>
</dbReference>
<dbReference type="GO" id="GO:0036416">
    <property type="term" value="P:tRNA stabilization"/>
    <property type="evidence" value="ECO:0000315"/>
    <property type="project" value="UniProtKB"/>
</dbReference>
<dbReference type="CDD" id="cd00315">
    <property type="entry name" value="Cyt_C5_DNA_methylase"/>
    <property type="match status" value="1"/>
</dbReference>
<dbReference type="FunFam" id="3.40.50.150:FF:000285">
    <property type="entry name" value="tRNA (cytosine(38)-C(5))-methyltransferase"/>
    <property type="match status" value="1"/>
</dbReference>
<dbReference type="FunFam" id="3.90.120.10:FF:000005">
    <property type="entry name" value="tRNA (Cytosine(38)-C(5))-methyltransferase isoform X1"/>
    <property type="match status" value="1"/>
</dbReference>
<dbReference type="Gene3D" id="3.90.120.10">
    <property type="entry name" value="DNA Methylase, subunit A, domain 2"/>
    <property type="match status" value="1"/>
</dbReference>
<dbReference type="Gene3D" id="3.40.50.150">
    <property type="entry name" value="Vaccinia Virus protein VP39"/>
    <property type="match status" value="1"/>
</dbReference>
<dbReference type="InterPro" id="IPR050750">
    <property type="entry name" value="C5-MTase"/>
</dbReference>
<dbReference type="InterPro" id="IPR001525">
    <property type="entry name" value="C5_MeTfrase"/>
</dbReference>
<dbReference type="InterPro" id="IPR031303">
    <property type="entry name" value="C5_meth_CS"/>
</dbReference>
<dbReference type="InterPro" id="IPR029063">
    <property type="entry name" value="SAM-dependent_MTases_sf"/>
</dbReference>
<dbReference type="NCBIfam" id="TIGR00675">
    <property type="entry name" value="dcm"/>
    <property type="match status" value="1"/>
</dbReference>
<dbReference type="PANTHER" id="PTHR46098">
    <property type="entry name" value="TRNA (CYTOSINE(38)-C(5))-METHYLTRANSFERASE"/>
    <property type="match status" value="1"/>
</dbReference>
<dbReference type="PANTHER" id="PTHR46098:SF1">
    <property type="entry name" value="TRNA (CYTOSINE(38)-C(5))-METHYLTRANSFERASE"/>
    <property type="match status" value="1"/>
</dbReference>
<dbReference type="Pfam" id="PF00145">
    <property type="entry name" value="DNA_methylase"/>
    <property type="match status" value="1"/>
</dbReference>
<dbReference type="PRINTS" id="PR00105">
    <property type="entry name" value="C5METTRFRASE"/>
</dbReference>
<dbReference type="SUPFAM" id="SSF53335">
    <property type="entry name" value="S-adenosyl-L-methionine-dependent methyltransferases"/>
    <property type="match status" value="1"/>
</dbReference>
<dbReference type="PROSITE" id="PS00095">
    <property type="entry name" value="C5_MTASE_2"/>
    <property type="match status" value="1"/>
</dbReference>
<dbReference type="PROSITE" id="PS51679">
    <property type="entry name" value="SAM_MT_C5"/>
    <property type="match status" value="1"/>
</dbReference>
<keyword id="KW-0963">Cytoplasm</keyword>
<keyword id="KW-0489">Methyltransferase</keyword>
<keyword id="KW-1185">Reference proteome</keyword>
<keyword id="KW-0694">RNA-binding</keyword>
<keyword id="KW-0949">S-adenosyl-L-methionine</keyword>
<keyword id="KW-0808">Transferase</keyword>
<keyword id="KW-0819">tRNA processing</keyword>
<protein>
    <recommendedName>
        <fullName>tRNA (cytosine(38)-C(5))-methyltransferase</fullName>
        <ecNumber evidence="5">2.1.1.204</ecNumber>
    </recommendedName>
    <alternativeName>
        <fullName evidence="8">DNA (cytosine-5)-methyltransferase-like protein 2</fullName>
        <shortName evidence="8">Dnmt2</shortName>
    </alternativeName>
    <alternativeName>
        <fullName>DNA methyltransferase homolog MmuIIP</fullName>
        <shortName>DNA MTase homolog MmuIIP</shortName>
        <shortName>M.MmuIIP</shortName>
    </alternativeName>
    <alternativeName>
        <fullName>Met-2</fullName>
    </alternativeName>
</protein>
<organism>
    <name type="scientific">Mus musculus</name>
    <name type="common">Mouse</name>
    <dbReference type="NCBI Taxonomy" id="10090"/>
    <lineage>
        <taxon>Eukaryota</taxon>
        <taxon>Metazoa</taxon>
        <taxon>Chordata</taxon>
        <taxon>Craniata</taxon>
        <taxon>Vertebrata</taxon>
        <taxon>Euteleostomi</taxon>
        <taxon>Mammalia</taxon>
        <taxon>Eutheria</taxon>
        <taxon>Euarchontoglires</taxon>
        <taxon>Glires</taxon>
        <taxon>Rodentia</taxon>
        <taxon>Myomorpha</taxon>
        <taxon>Muroidea</taxon>
        <taxon>Muridae</taxon>
        <taxon>Murinae</taxon>
        <taxon>Mus</taxon>
        <taxon>Mus</taxon>
    </lineage>
</organism>
<reference key="1">
    <citation type="journal article" date="1998" name="Hum. Mol. Genet.">
        <title>A candidate mammalian DNA methyltransferase related to pmt1p of fission yeast.</title>
        <authorList>
            <person name="Yoder J.A."/>
            <person name="Bestor T.H."/>
        </authorList>
    </citation>
    <scope>NUCLEOTIDE SEQUENCE [MRNA]</scope>
</reference>
<reference key="2">
    <citation type="journal article" date="1998" name="Nucleic Acids Res.">
        <title>Dnmt2 is not required for de novo and maintenance methylation of viral DNA in embryonic stem cells.</title>
        <authorList>
            <person name="Okano M."/>
            <person name="Xie S."/>
            <person name="Li E."/>
        </authorList>
    </citation>
    <scope>NUCLEOTIDE SEQUENCE [MRNA]</scope>
    <scope>TISSUE SPECIFICITY</scope>
    <source>
        <tissue>Embryonic stem cell</tissue>
    </source>
</reference>
<reference key="3">
    <citation type="journal article" date="2006" name="Science">
        <title>Methylation of tRNAAsp by the DNA methyltransferase homolog Dnmt2.</title>
        <authorList>
            <person name="Goll M.G."/>
            <person name="Kirpekar F."/>
            <person name="Maggert K.A."/>
            <person name="Yoder J.A."/>
            <person name="Hsieh C.L."/>
            <person name="Zhang X."/>
            <person name="Golic K.G."/>
            <person name="Jacobsen S.E."/>
            <person name="Bestor T.H."/>
        </authorList>
    </citation>
    <scope>FUNCTION</scope>
    <scope>DISRUPTION PHENOTYPE</scope>
</reference>
<reference key="4">
    <citation type="journal article" date="2010" name="Cell">
        <title>A tissue-specific atlas of mouse protein phosphorylation and expression.</title>
        <authorList>
            <person name="Huttlin E.L."/>
            <person name="Jedrychowski M.P."/>
            <person name="Elias J.E."/>
            <person name="Goswami T."/>
            <person name="Rad R."/>
            <person name="Beausoleil S.A."/>
            <person name="Villen J."/>
            <person name="Haas W."/>
            <person name="Sowa M.E."/>
            <person name="Gygi S.P."/>
        </authorList>
    </citation>
    <scope>IDENTIFICATION BY MASS SPECTROMETRY [LARGE SCALE ANALYSIS]</scope>
    <source>
        <tissue>Spleen</tissue>
    </source>
</reference>
<reference key="5">
    <citation type="journal article" date="2012" name="Nat. Struct. Mol. Biol.">
        <title>RNA cytosine methylation by Dnmt2 and NSun2 promotes tRNA stability and protein synthesis.</title>
        <authorList>
            <person name="Tuorto F."/>
            <person name="Liebers R."/>
            <person name="Musch T."/>
            <person name="Schaefer M."/>
            <person name="Hofmann S."/>
            <person name="Kellner S."/>
            <person name="Frye M."/>
            <person name="Helm M."/>
            <person name="Stoecklin G."/>
            <person name="Lyko F."/>
        </authorList>
    </citation>
    <scope>FUNCTION</scope>
    <scope>CATALYTIC ACTIVITY</scope>
    <scope>DISRUPTION PHENOTYPE</scope>
</reference>
<reference key="6">
    <citation type="journal article" date="2015" name="EMBO J.">
        <title>The tRNA methyltransferase Dnmt2 is required for accurate polypeptide synthesis during haematopoiesis.</title>
        <authorList>
            <person name="Tuorto F."/>
            <person name="Herbst F."/>
            <person name="Alerasool N."/>
            <person name="Bender S."/>
            <person name="Popp O."/>
            <person name="Federico G."/>
            <person name="Reitter S."/>
            <person name="Liebers R."/>
            <person name="Stoecklin G."/>
            <person name="Groene H.J."/>
            <person name="Dittmar G."/>
            <person name="Glimm H."/>
            <person name="Lyko F."/>
        </authorList>
    </citation>
    <scope>FUNCTION</scope>
    <scope>DISRUPTION PHENOTYPE</scope>
</reference>
<proteinExistence type="evidence at protein level"/>
<name>TRDMT_MOUSE</name>
<gene>
    <name type="primary">Trdmt1</name>
    <name evidence="8" type="synonym">Dnmt2</name>
    <name type="synonym">Met2</name>
</gene>
<evidence type="ECO:0000250" key="1">
    <source>
        <dbReference type="UniProtKB" id="O14717"/>
    </source>
</evidence>
<evidence type="ECO:0000255" key="2">
    <source>
        <dbReference type="PROSITE-ProRule" id="PRU01016"/>
    </source>
</evidence>
<evidence type="ECO:0000269" key="3">
    <source>
    </source>
</evidence>
<evidence type="ECO:0000269" key="4">
    <source>
    </source>
</evidence>
<evidence type="ECO:0000269" key="5">
    <source>
    </source>
</evidence>
<evidence type="ECO:0000269" key="6">
    <source>
    </source>
</evidence>
<evidence type="ECO:0000269" key="7">
    <source>
    </source>
</evidence>
<evidence type="ECO:0000303" key="8">
    <source>
    </source>
</evidence>
<evidence type="ECO:0000305" key="9"/>
<comment type="function">
    <text evidence="1 4 5 6">Specifically methylates cytosine 38 in the anticodon loop of tRNA(Asp) (PubMed:21183079, PubMed:22885326, PubMed:26271101). Has higher activity on tRNA(Asp) modified with queuosine at position 34 (By similarity).</text>
</comment>
<comment type="catalytic activity">
    <reaction evidence="5">
        <text>cytidine(38) in tRNA + S-adenosyl-L-methionine = 5-methylcytidine(38) in tRNA + S-adenosyl-L-homocysteine + H(+)</text>
        <dbReference type="Rhea" id="RHEA:42956"/>
        <dbReference type="Rhea" id="RHEA-COMP:10299"/>
        <dbReference type="Rhea" id="RHEA-COMP:10300"/>
        <dbReference type="ChEBI" id="CHEBI:15378"/>
        <dbReference type="ChEBI" id="CHEBI:57856"/>
        <dbReference type="ChEBI" id="CHEBI:59789"/>
        <dbReference type="ChEBI" id="CHEBI:74483"/>
        <dbReference type="ChEBI" id="CHEBI:82748"/>
        <dbReference type="EC" id="2.1.1.204"/>
    </reaction>
    <physiologicalReaction direction="left-to-right" evidence="5">
        <dbReference type="Rhea" id="RHEA:42957"/>
    </physiologicalReaction>
</comment>
<comment type="subcellular location">
    <subcellularLocation>
        <location evidence="1">Cytoplasm</location>
    </subcellularLocation>
</comment>
<comment type="tissue specificity">
    <text evidence="7">Highly expressed in thymus, testis, and at much lower levels in spleen, lung, brain, heart, kidney, liver, skeletal muscle and embryonic stem cells.</text>
</comment>
<comment type="disruption phenotype">
    <text evidence="3 5 6">Mice are viable and fertile, but show loss of 5-methylcytidine(38) in tRNA (PubMed:16424344, PubMed:22885326). Mice show delayed endochondral ossification, accompanied by a reduction of the haematopoietic stem and progenitor cell population (PubMed:26271101). Defects are caused by impaired protein synthesis in the bone marrow and codon mistranslation by tRNAs (PubMed:26271101). Mice lacking both Nsun2 and Trdmt1 display a complete loss of cytosine-C5 tRNA methylation, leading to development defects and impaired cellular differentiation causing lethality before P3 (PubMed:22885326).</text>
</comment>
<comment type="similarity">
    <text evidence="2">Belongs to the class I-like SAM-binding methyltransferase superfamily. C5-methyltransferase family.</text>
</comment>